<evidence type="ECO:0000250" key="1"/>
<evidence type="ECO:0000250" key="2">
    <source>
        <dbReference type="UniProtKB" id="Q8TD08"/>
    </source>
</evidence>
<evidence type="ECO:0000250" key="3">
    <source>
        <dbReference type="UniProtKB" id="Q9Z2A6"/>
    </source>
</evidence>
<evidence type="ECO:0000255" key="4">
    <source>
        <dbReference type="PROSITE-ProRule" id="PRU00159"/>
    </source>
</evidence>
<evidence type="ECO:0000256" key="5">
    <source>
        <dbReference type="SAM" id="MobiDB-lite"/>
    </source>
</evidence>
<evidence type="ECO:0000269" key="6">
    <source>
    </source>
</evidence>
<evidence type="ECO:0000269" key="7">
    <source>
    </source>
</evidence>
<evidence type="ECO:0000269" key="8">
    <source>
    </source>
</evidence>
<evidence type="ECO:0000303" key="9">
    <source>
    </source>
</evidence>
<evidence type="ECO:0000303" key="10">
    <source>
    </source>
</evidence>
<evidence type="ECO:0000305" key="11"/>
<evidence type="ECO:0000312" key="12">
    <source>
        <dbReference type="MGI" id="MGI:2652894"/>
    </source>
</evidence>
<evidence type="ECO:0007744" key="13">
    <source>
    </source>
</evidence>
<organism>
    <name type="scientific">Mus musculus</name>
    <name type="common">Mouse</name>
    <dbReference type="NCBI Taxonomy" id="10090"/>
    <lineage>
        <taxon>Eukaryota</taxon>
        <taxon>Metazoa</taxon>
        <taxon>Chordata</taxon>
        <taxon>Craniata</taxon>
        <taxon>Vertebrata</taxon>
        <taxon>Euteleostomi</taxon>
        <taxon>Mammalia</taxon>
        <taxon>Eutheria</taxon>
        <taxon>Euarchontoglires</taxon>
        <taxon>Glires</taxon>
        <taxon>Rodentia</taxon>
        <taxon>Myomorpha</taxon>
        <taxon>Muroidea</taxon>
        <taxon>Muridae</taxon>
        <taxon>Murinae</taxon>
        <taxon>Mus</taxon>
        <taxon>Mus</taxon>
    </lineage>
</organism>
<protein>
    <recommendedName>
        <fullName evidence="11">Mitogen-activated protein kinase 15</fullName>
        <shortName>MAP kinase 15</shortName>
        <shortName>MAPK 15</shortName>
        <ecNumber>2.7.11.24</ecNumber>
    </recommendedName>
    <alternativeName>
        <fullName>Extracellular signal-regulated kinase 7</fullName>
        <shortName>ERK-7</shortName>
    </alternativeName>
    <alternativeName>
        <fullName>Extracellular signal-regulated kinase 8</fullName>
        <shortName>ERK-8</shortName>
    </alternativeName>
</protein>
<keyword id="KW-0067">ATP-binding</keyword>
<keyword id="KW-0965">Cell junction</keyword>
<keyword id="KW-0966">Cell projection</keyword>
<keyword id="KW-0963">Cytoplasm</keyword>
<keyword id="KW-0968">Cytoplasmic vesicle</keyword>
<keyword id="KW-0206">Cytoskeleton</keyword>
<keyword id="KW-0333">Golgi apparatus</keyword>
<keyword id="KW-0418">Kinase</keyword>
<keyword id="KW-0488">Methylation</keyword>
<keyword id="KW-0547">Nucleotide-binding</keyword>
<keyword id="KW-0539">Nucleus</keyword>
<keyword id="KW-0597">Phosphoprotein</keyword>
<keyword id="KW-1185">Reference proteome</keyword>
<keyword id="KW-0677">Repeat</keyword>
<keyword id="KW-0723">Serine/threonine-protein kinase</keyword>
<keyword id="KW-0796">Tight junction</keyword>
<keyword id="KW-0808">Transferase</keyword>
<keyword id="KW-0832">Ubl conjugation</keyword>
<dbReference type="EC" id="2.7.11.24"/>
<dbReference type="EMBL" id="BC048082">
    <property type="protein sequence ID" value="AAH48082.1"/>
    <property type="molecule type" value="mRNA"/>
</dbReference>
<dbReference type="CCDS" id="CCDS27558.1"/>
<dbReference type="RefSeq" id="NP_808590.1">
    <property type="nucleotide sequence ID" value="NM_177922.3"/>
</dbReference>
<dbReference type="SMR" id="Q80Y86"/>
<dbReference type="BioGRID" id="237123">
    <property type="interactions" value="8"/>
</dbReference>
<dbReference type="FunCoup" id="Q80Y86">
    <property type="interactions" value="465"/>
</dbReference>
<dbReference type="STRING" id="10090.ENSMUSP00000087098"/>
<dbReference type="GlyGen" id="Q80Y86">
    <property type="glycosylation" value="1 site, 1 O-linked glycan (1 site)"/>
</dbReference>
<dbReference type="iPTMnet" id="Q80Y86"/>
<dbReference type="PhosphoSitePlus" id="Q80Y86"/>
<dbReference type="SwissPalm" id="Q80Y86"/>
<dbReference type="PaxDb" id="10090-ENSMUSP00000087098"/>
<dbReference type="ProteomicsDB" id="291466"/>
<dbReference type="Pumba" id="Q80Y86"/>
<dbReference type="Antibodypedia" id="957">
    <property type="antibodies" value="351 antibodies from 32 providers"/>
</dbReference>
<dbReference type="DNASU" id="332110"/>
<dbReference type="Ensembl" id="ENSMUST00000089669.6">
    <property type="protein sequence ID" value="ENSMUSP00000087098.5"/>
    <property type="gene ID" value="ENSMUSG00000063704.14"/>
</dbReference>
<dbReference type="GeneID" id="332110"/>
<dbReference type="KEGG" id="mmu:332110"/>
<dbReference type="UCSC" id="uc007whz.1">
    <property type="organism name" value="mouse"/>
</dbReference>
<dbReference type="AGR" id="MGI:2652894"/>
<dbReference type="CTD" id="225689"/>
<dbReference type="MGI" id="MGI:2652894">
    <property type="gene designation" value="Mapk15"/>
</dbReference>
<dbReference type="VEuPathDB" id="HostDB:ENSMUSG00000063704"/>
<dbReference type="eggNOG" id="KOG0660">
    <property type="taxonomic scope" value="Eukaryota"/>
</dbReference>
<dbReference type="GeneTree" id="ENSGT00940000159758"/>
<dbReference type="HOGENOM" id="CLU_000288_181_14_1"/>
<dbReference type="InParanoid" id="Q80Y86"/>
<dbReference type="OMA" id="PDQEWTR"/>
<dbReference type="OrthoDB" id="192887at2759"/>
<dbReference type="PhylomeDB" id="Q80Y86"/>
<dbReference type="TreeFam" id="TF105101"/>
<dbReference type="BioGRID-ORCS" id="332110">
    <property type="hits" value="2 hits in 80 CRISPR screens"/>
</dbReference>
<dbReference type="PRO" id="PR:Q80Y86"/>
<dbReference type="Proteomes" id="UP000000589">
    <property type="component" value="Chromosome 15"/>
</dbReference>
<dbReference type="RNAct" id="Q80Y86">
    <property type="molecule type" value="protein"/>
</dbReference>
<dbReference type="Bgee" id="ENSMUSG00000063704">
    <property type="expression patterns" value="Expressed in spermatocyte and 60 other cell types or tissues"/>
</dbReference>
<dbReference type="ExpressionAtlas" id="Q80Y86">
    <property type="expression patterns" value="baseline and differential"/>
</dbReference>
<dbReference type="GO" id="GO:0005776">
    <property type="term" value="C:autophagosome"/>
    <property type="evidence" value="ECO:0000250"/>
    <property type="project" value="UniProtKB"/>
</dbReference>
<dbReference type="GO" id="GO:0005923">
    <property type="term" value="C:bicellular tight junction"/>
    <property type="evidence" value="ECO:0007669"/>
    <property type="project" value="UniProtKB-SubCell"/>
</dbReference>
<dbReference type="GO" id="GO:0005911">
    <property type="term" value="C:cell-cell junction"/>
    <property type="evidence" value="ECO:0000250"/>
    <property type="project" value="UniProtKB"/>
</dbReference>
<dbReference type="GO" id="GO:0005814">
    <property type="term" value="C:centriole"/>
    <property type="evidence" value="ECO:0000250"/>
    <property type="project" value="UniProtKB"/>
</dbReference>
<dbReference type="GO" id="GO:0036064">
    <property type="term" value="C:ciliary basal body"/>
    <property type="evidence" value="ECO:0000250"/>
    <property type="project" value="UniProtKB"/>
</dbReference>
<dbReference type="GO" id="GO:0005737">
    <property type="term" value="C:cytoplasm"/>
    <property type="evidence" value="ECO:0000250"/>
    <property type="project" value="UniProtKB"/>
</dbReference>
<dbReference type="GO" id="GO:0031410">
    <property type="term" value="C:cytoplasmic vesicle"/>
    <property type="evidence" value="ECO:0007669"/>
    <property type="project" value="UniProtKB-KW"/>
</dbReference>
<dbReference type="GO" id="GO:0005794">
    <property type="term" value="C:Golgi apparatus"/>
    <property type="evidence" value="ECO:0000250"/>
    <property type="project" value="UniProtKB"/>
</dbReference>
<dbReference type="GO" id="GO:0072687">
    <property type="term" value="C:meiotic spindle"/>
    <property type="evidence" value="ECO:0000314"/>
    <property type="project" value="UniProtKB"/>
</dbReference>
<dbReference type="GO" id="GO:0005634">
    <property type="term" value="C:nucleus"/>
    <property type="evidence" value="ECO:0000250"/>
    <property type="project" value="UniProtKB"/>
</dbReference>
<dbReference type="GO" id="GO:0005524">
    <property type="term" value="F:ATP binding"/>
    <property type="evidence" value="ECO:0007669"/>
    <property type="project" value="UniProtKB-KW"/>
</dbReference>
<dbReference type="GO" id="GO:0003682">
    <property type="term" value="F:chromatin binding"/>
    <property type="evidence" value="ECO:0000250"/>
    <property type="project" value="UniProtKB"/>
</dbReference>
<dbReference type="GO" id="GO:0016301">
    <property type="term" value="F:kinase activity"/>
    <property type="evidence" value="ECO:0000250"/>
    <property type="project" value="UniProtKB"/>
</dbReference>
<dbReference type="GO" id="GO:0004707">
    <property type="term" value="F:MAP kinase activity"/>
    <property type="evidence" value="ECO:0000250"/>
    <property type="project" value="UniProtKB"/>
</dbReference>
<dbReference type="GO" id="GO:0004672">
    <property type="term" value="F:protein kinase activity"/>
    <property type="evidence" value="ECO:0000250"/>
    <property type="project" value="UniProtKB"/>
</dbReference>
<dbReference type="GO" id="GO:0106310">
    <property type="term" value="F:protein serine kinase activity"/>
    <property type="evidence" value="ECO:0007669"/>
    <property type="project" value="RHEA"/>
</dbReference>
<dbReference type="GO" id="GO:0006974">
    <property type="term" value="P:DNA damage response"/>
    <property type="evidence" value="ECO:0007669"/>
    <property type="project" value="Ensembl"/>
</dbReference>
<dbReference type="GO" id="GO:0090494">
    <property type="term" value="P:dopamine uptake"/>
    <property type="evidence" value="ECO:0000250"/>
    <property type="project" value="UniProtKB"/>
</dbReference>
<dbReference type="GO" id="GO:0007029">
    <property type="term" value="P:endoplasmic reticulum organization"/>
    <property type="evidence" value="ECO:0000250"/>
    <property type="project" value="UniProtKB"/>
</dbReference>
<dbReference type="GO" id="GO:0030336">
    <property type="term" value="P:negative regulation of cell migration"/>
    <property type="evidence" value="ECO:0000250"/>
    <property type="project" value="UniProtKB"/>
</dbReference>
<dbReference type="GO" id="GO:0008284">
    <property type="term" value="P:positive regulation of cell population proliferation"/>
    <property type="evidence" value="ECO:0000250"/>
    <property type="project" value="UniProtKB"/>
</dbReference>
<dbReference type="GO" id="GO:1905188">
    <property type="term" value="P:positive regulation of metaphase/anaphase transition of meiosis I"/>
    <property type="evidence" value="ECO:0000315"/>
    <property type="project" value="UniProtKB"/>
</dbReference>
<dbReference type="GO" id="GO:1905832">
    <property type="term" value="P:positive regulation of spindle assembly"/>
    <property type="evidence" value="ECO:0000315"/>
    <property type="project" value="UniProtKB"/>
</dbReference>
<dbReference type="GO" id="GO:0032206">
    <property type="term" value="P:positive regulation of telomere maintenance"/>
    <property type="evidence" value="ECO:0007669"/>
    <property type="project" value="Ensembl"/>
</dbReference>
<dbReference type="GO" id="GO:0045944">
    <property type="term" value="P:positive regulation of transcription by RNA polymerase II"/>
    <property type="evidence" value="ECO:0007669"/>
    <property type="project" value="Ensembl"/>
</dbReference>
<dbReference type="GO" id="GO:0046777">
    <property type="term" value="P:protein autophosphorylation"/>
    <property type="evidence" value="ECO:0000250"/>
    <property type="project" value="UniProtKB"/>
</dbReference>
<dbReference type="GO" id="GO:1904491">
    <property type="term" value="P:protein localization to ciliary transition zone"/>
    <property type="evidence" value="ECO:0007669"/>
    <property type="project" value="Ensembl"/>
</dbReference>
<dbReference type="GO" id="GO:0010506">
    <property type="term" value="P:regulation of autophagy"/>
    <property type="evidence" value="ECO:0000250"/>
    <property type="project" value="UniProtKB"/>
</dbReference>
<dbReference type="GO" id="GO:1902017">
    <property type="term" value="P:regulation of cilium assembly"/>
    <property type="evidence" value="ECO:0000315"/>
    <property type="project" value="UniProtKB"/>
</dbReference>
<dbReference type="GO" id="GO:0003400">
    <property type="term" value="P:regulation of COPII vesicle coating"/>
    <property type="evidence" value="ECO:0000250"/>
    <property type="project" value="UniProtKB"/>
</dbReference>
<dbReference type="CDD" id="cd07852">
    <property type="entry name" value="STKc_MAPK15-like"/>
    <property type="match status" value="1"/>
</dbReference>
<dbReference type="FunFam" id="1.10.510.10:FF:000238">
    <property type="entry name" value="Mitogen-activated protein kinase"/>
    <property type="match status" value="1"/>
</dbReference>
<dbReference type="FunFam" id="3.30.200.20:FF:000166">
    <property type="entry name" value="Mitogen-activated protein kinase"/>
    <property type="match status" value="1"/>
</dbReference>
<dbReference type="Gene3D" id="3.30.200.20">
    <property type="entry name" value="Phosphorylase Kinase, domain 1"/>
    <property type="match status" value="1"/>
</dbReference>
<dbReference type="Gene3D" id="1.10.510.10">
    <property type="entry name" value="Transferase(Phosphotransferase) domain 1"/>
    <property type="match status" value="1"/>
</dbReference>
<dbReference type="InterPro" id="IPR011009">
    <property type="entry name" value="Kinase-like_dom_sf"/>
</dbReference>
<dbReference type="InterPro" id="IPR050117">
    <property type="entry name" value="MAP_kinase"/>
</dbReference>
<dbReference type="InterPro" id="IPR003527">
    <property type="entry name" value="MAP_kinase_CS"/>
</dbReference>
<dbReference type="InterPro" id="IPR000719">
    <property type="entry name" value="Prot_kinase_dom"/>
</dbReference>
<dbReference type="InterPro" id="IPR017441">
    <property type="entry name" value="Protein_kinase_ATP_BS"/>
</dbReference>
<dbReference type="PANTHER" id="PTHR24055">
    <property type="entry name" value="MITOGEN-ACTIVATED PROTEIN KINASE"/>
    <property type="match status" value="1"/>
</dbReference>
<dbReference type="Pfam" id="PF00069">
    <property type="entry name" value="Pkinase"/>
    <property type="match status" value="1"/>
</dbReference>
<dbReference type="SUPFAM" id="SSF56112">
    <property type="entry name" value="Protein kinase-like (PK-like)"/>
    <property type="match status" value="1"/>
</dbReference>
<dbReference type="PROSITE" id="PS01351">
    <property type="entry name" value="MAPK"/>
    <property type="match status" value="1"/>
</dbReference>
<dbReference type="PROSITE" id="PS00107">
    <property type="entry name" value="PROTEIN_KINASE_ATP"/>
    <property type="match status" value="1"/>
</dbReference>
<dbReference type="PROSITE" id="PS50011">
    <property type="entry name" value="PROTEIN_KINASE_DOM"/>
    <property type="match status" value="1"/>
</dbReference>
<comment type="function">
    <text evidence="2 3 7 8">Atypical MAPK protein that regulates several process such as autophagy, ciliogenesis, protein trafficking/secretion and genome integrity, in a kinase activity-dependent manner (By similarity) (PubMed:25823377). Controls both, basal and starvation-induced autophagy throught its interaction with GABARAP, MAP1LC3B and GABARAPL1 leading to autophagosome formation, SQSTM1 degradation and reduced MAP1LC3B inhibitory phosphorylation. Regulates primary cilium formation and the localization of ciliary proteins involved in cilium structure, transport, and signaling. Prevents the relocation of the sugar-adding enzymes from the Golgi to the endoplasmic reticulum, thereby restricting the production of sugar-coated proteins. Upon amino-acid starvation, mediates transitional endoplasmic reticulum site disassembly and inhibition of secretion. Binds to chromatin leading to MAPK15 activation and interaction with PCNA, that which protects genomic integrity by inhibiting MDM2-mediated degradation of PCNA. Regulates DA transporter (DAT) activity and protein expression via activation of RhoA. In response to H(2)O(2) treatment phosphorylates ELAVL1, thus preventing it from binding to the PDCD4 3'UTR and rendering the PDCD4 mRNA accessible to miR-21 and leading to its degradation and loss of protein expression (By similarity). Also functions in a kinase activity-independent manner as a negative regulator of growth (By similarity). Phosphorylates in vitro FOS and MBP (By similarity). During oocyte maturation, plays a key role in the microtubule organization and meiotic cell cycle progression in oocytes, fertilized eggs, and early embryos (PubMed:23351492). Interacts with ESRRA promoting its re-localization from the nucleus to the cytoplasm and then prevents its transcriptional activity (By similarity).</text>
</comment>
<comment type="catalytic activity">
    <reaction>
        <text>L-seryl-[protein] + ATP = O-phospho-L-seryl-[protein] + ADP + H(+)</text>
        <dbReference type="Rhea" id="RHEA:17989"/>
        <dbReference type="Rhea" id="RHEA-COMP:9863"/>
        <dbReference type="Rhea" id="RHEA-COMP:11604"/>
        <dbReference type="ChEBI" id="CHEBI:15378"/>
        <dbReference type="ChEBI" id="CHEBI:29999"/>
        <dbReference type="ChEBI" id="CHEBI:30616"/>
        <dbReference type="ChEBI" id="CHEBI:83421"/>
        <dbReference type="ChEBI" id="CHEBI:456216"/>
        <dbReference type="EC" id="2.7.11.24"/>
    </reaction>
</comment>
<comment type="catalytic activity">
    <reaction>
        <text>L-threonyl-[protein] + ATP = O-phospho-L-threonyl-[protein] + ADP + H(+)</text>
        <dbReference type="Rhea" id="RHEA:46608"/>
        <dbReference type="Rhea" id="RHEA-COMP:11060"/>
        <dbReference type="Rhea" id="RHEA-COMP:11605"/>
        <dbReference type="ChEBI" id="CHEBI:15378"/>
        <dbReference type="ChEBI" id="CHEBI:30013"/>
        <dbReference type="ChEBI" id="CHEBI:30616"/>
        <dbReference type="ChEBI" id="CHEBI:61977"/>
        <dbReference type="ChEBI" id="CHEBI:456216"/>
        <dbReference type="EC" id="2.7.11.24"/>
    </reaction>
</comment>
<comment type="activity regulation">
    <text evidence="2 3">Activated by threonine and tyrosine phosphorylation (By similarity). Inhibited by dual specificity phosphatases, such as DUSP1 (By similarity). Phosphorylation and activation in response to DNA damaging agents, serum stimulation. Constitutively activated when phosphorylated on Tyr-178. Activity depends on the relative rates of MAPK15 autophosphorylation and dephosphorylation by PTPN1 (By similarity).</text>
</comment>
<comment type="subunit">
    <text evidence="2 3 6 8">Interacts with TGFB1I1 (PubMed:16624805). Interacts with CSK/c-Src, ABL1 and RET. Interacts with GABARAP, MAP1LC3B and GABARAPL1; controls, in a kinase-dependent fashion, both basal and starvation-induced autophagy. Interacts with ESRRA; promotes re-localization of ESRRA to the cytoplasm through a XPO1-dependent mechanism then inhibits ESRRA transcriptional activity. Interacts with PCNA; the interaction is chromatin binding- and kinase activity-dependent and prevents MDM2-mediated PCNA destruction by inhibiting the association of PCNA with MDM2 (By similarity). Interacts with DVL2 (PubMed:25823377). Interacts with CLIC3; MAPK15 does not phosphorylates CLIC3 (By similarity).</text>
</comment>
<comment type="subcellular location">
    <subcellularLocation>
        <location evidence="2">Cytoplasm</location>
        <location evidence="2">Cytoskeleton</location>
        <location evidence="2">Cilium basal body</location>
    </subcellularLocation>
    <subcellularLocation>
        <location evidence="2">Cell junction</location>
        <location evidence="2">Tight junction</location>
    </subcellularLocation>
    <subcellularLocation>
        <location evidence="2">Cytoplasm</location>
        <location evidence="2">Cytoskeleton</location>
        <location evidence="2">Microtubule organizing center</location>
        <location evidence="2">Centrosome</location>
        <location evidence="2">Centriole</location>
    </subcellularLocation>
    <subcellularLocation>
        <location evidence="2">Cytoplasmic vesicle</location>
        <location evidence="2">Autophagosome</location>
    </subcellularLocation>
    <subcellularLocation>
        <location evidence="2">Golgi apparatus</location>
    </subcellularLocation>
    <subcellularLocation>
        <location evidence="2">Nucleus</location>
    </subcellularLocation>
    <subcellularLocation>
        <location evidence="2">Cytoplasm</location>
    </subcellularLocation>
    <subcellularLocation>
        <location evidence="7">Cytoplasm</location>
        <location evidence="7">Cytoskeleton</location>
        <location evidence="7">Spindle</location>
    </subcellularLocation>
    <text evidence="2 7">Co-localizes to the cytoplasm only in presence of ESRRA. Translocates to the nucleus upon activation (By similarity). At prometaphase I, metaphase I (MI), anaphase I, telophase I, and metaphase II (MII) stages, is stably detected at the spindle (PubMed:23351492).</text>
</comment>
<comment type="tissue specificity">
    <text evidence="7">Expressed at all stages of oocyte meiotic maturation.</text>
</comment>
<comment type="domain">
    <text evidence="1">The N-terminal region (1-20) is the minimal region necessary for ubiquitination and further proteasomal degradation.</text>
</comment>
<comment type="domain">
    <text>The TXY motif contains the threonine and tyrosine residues whose phosphorylation activates the MAP kinases.</text>
</comment>
<comment type="PTM">
    <text evidence="2">Autophosphorylated on Thr-176 and Tyr-178; activates the enzyme.</text>
</comment>
<comment type="PTM">
    <text evidence="3">Ubiquitinated. Ubiquitination may allow its tight kinase activity regulation and rapid turnover. May be ubiquitinated by a SCF E3 ligase (By similarity).</text>
</comment>
<comment type="similarity">
    <text evidence="11">Belongs to the protein kinase superfamily. CMGC Ser/Thr protein kinase family. MAP kinase subfamily.</text>
</comment>
<reference key="1">
    <citation type="journal article" date="2004" name="Genome Res.">
        <title>The status, quality, and expansion of the NIH full-length cDNA project: the Mammalian Gene Collection (MGC).</title>
        <authorList>
            <consortium name="The MGC Project Team"/>
        </authorList>
    </citation>
    <scope>NUCLEOTIDE SEQUENCE [LARGE SCALE MRNA]</scope>
    <source>
        <tissue>Olfactory epithelium</tissue>
    </source>
</reference>
<reference key="2">
    <citation type="journal article" date="2006" name="J. Biol. Chem.">
        <title>ERK8 down-regulates transactivation of the glucocorticoid receptor through Hic-5.</title>
        <authorList>
            <person name="Saelzler M.P."/>
            <person name="Spackman C.C."/>
            <person name="Liu Y."/>
            <person name="Martinez L.C."/>
            <person name="Harris J.P."/>
            <person name="Abe M.K."/>
        </authorList>
    </citation>
    <scope>INTERACTION WITH TGFB1I1</scope>
</reference>
<reference key="3">
    <citation type="journal article" date="2010" name="Cell">
        <title>A tissue-specific atlas of mouse protein phosphorylation and expression.</title>
        <authorList>
            <person name="Huttlin E.L."/>
            <person name="Jedrychowski M.P."/>
            <person name="Elias J.E."/>
            <person name="Goswami T."/>
            <person name="Rad R."/>
            <person name="Beausoleil S.A."/>
            <person name="Villen J."/>
            <person name="Haas W."/>
            <person name="Sowa M.E."/>
            <person name="Gygi S.P."/>
        </authorList>
    </citation>
    <scope>PHOSPHORYLATION [LARGE SCALE ANALYSIS] AT THR-176 AND TYR-178</scope>
    <scope>IDENTIFICATION BY MASS SPECTROMETRY [LARGE SCALE ANALYSIS]</scope>
    <source>
        <tissue>Lung</tissue>
    </source>
</reference>
<reference key="4">
    <citation type="journal article" date="2013" name="Microsc. Microanal.">
        <title>The distribution and possible role of ERK8 in mouse oocyte meiotic maturation and early embryo cleavage.</title>
        <authorList>
            <person name="Yang S.W."/>
            <person name="Huang H."/>
            <person name="Gao C."/>
            <person name="Chen L."/>
            <person name="Qi S.T."/>
            <person name="Lin F."/>
            <person name="Wang J.X."/>
            <person name="Hou Y."/>
            <person name="Xing F.Q."/>
            <person name="Sun Q.Y."/>
        </authorList>
    </citation>
    <scope>SUBCELLULAR LOCATION</scope>
    <scope>TISSUE SPECIFICITY</scope>
    <scope>FUNCTION</scope>
</reference>
<reference key="5">
    <citation type="journal article" date="2015" name="Nat. Commun.">
        <title>ERK7 regulates ciliogenesis by phosphorylating the actin regulator CapZIP in cooperation with Dishevelled.</title>
        <authorList>
            <person name="Miyatake K."/>
            <person name="Kusakabe M."/>
            <person name="Takahashi C."/>
            <person name="Nishida E."/>
        </authorList>
    </citation>
    <scope>INTERACTION WITH DVL2</scope>
    <scope>FUNCTION</scope>
</reference>
<feature type="chain" id="PRO_0000232638" description="Mitogen-activated protein kinase 15">
    <location>
        <begin position="1"/>
        <end position="549"/>
    </location>
</feature>
<feature type="domain" description="Protein kinase" evidence="4">
    <location>
        <begin position="14"/>
        <end position="305"/>
    </location>
</feature>
<feature type="repeat" description="PXXXP motif" evidence="2">
    <location>
        <begin position="380"/>
        <end position="384"/>
    </location>
</feature>
<feature type="repeat" description="PXXXP motif" evidence="2">
    <location>
        <begin position="387"/>
        <end position="391"/>
    </location>
</feature>
<feature type="repeat" description="PXXXP motif; regulates binding with chromatin and interaction with PCNA" evidence="2">
    <location>
        <begin position="395"/>
        <end position="399"/>
    </location>
</feature>
<feature type="repeat" description="PXXXP motif; regulates binding with chromatin and interaction with PCNA" evidence="2">
    <location>
        <begin position="403"/>
        <end position="407"/>
    </location>
</feature>
<feature type="region of interest" description="Ubiquitin-conjugating">
    <location>
        <begin position="1"/>
        <end position="20"/>
    </location>
</feature>
<feature type="region of interest" description="Necessary to interact with ESRRA, to regulate its subcellular localization and to inhibit its transcriptional activity" evidence="2">
    <location>
        <begin position="266"/>
        <end position="286"/>
    </location>
</feature>
<feature type="region of interest" description="Requires for interaction with GABARAP, MAP1LC3B AND GABARAPL1" evidence="2">
    <location>
        <begin position="301"/>
        <end position="382"/>
    </location>
</feature>
<feature type="region of interest" description="Disordered" evidence="5">
    <location>
        <begin position="370"/>
        <end position="507"/>
    </location>
</feature>
<feature type="short sequence motif" description="TXY">
    <location>
        <begin position="176"/>
        <end position="178"/>
    </location>
</feature>
<feature type="compositionally biased region" description="Basic and acidic residues" evidence="5">
    <location>
        <begin position="403"/>
        <end position="416"/>
    </location>
</feature>
<feature type="compositionally biased region" description="Polar residues" evidence="5">
    <location>
        <begin position="456"/>
        <end position="467"/>
    </location>
</feature>
<feature type="compositionally biased region" description="Low complexity" evidence="5">
    <location>
        <begin position="483"/>
        <end position="492"/>
    </location>
</feature>
<feature type="compositionally biased region" description="Basic and acidic residues" evidence="5">
    <location>
        <begin position="493"/>
        <end position="502"/>
    </location>
</feature>
<feature type="active site" description="Proton acceptor" evidence="4">
    <location>
        <position position="138"/>
    </location>
</feature>
<feature type="binding site" evidence="4">
    <location>
        <begin position="20"/>
        <end position="28"/>
    </location>
    <ligand>
        <name>ATP</name>
        <dbReference type="ChEBI" id="CHEBI:30616"/>
    </ligand>
</feature>
<feature type="binding site" evidence="4">
    <location>
        <position position="43"/>
    </location>
    <ligand>
        <name>ATP</name>
        <dbReference type="ChEBI" id="CHEBI:30616"/>
    </ligand>
</feature>
<feature type="modified residue" description="Phosphothreonine" evidence="13">
    <location>
        <position position="176"/>
    </location>
</feature>
<feature type="modified residue" description="Phosphotyrosine" evidence="13">
    <location>
        <position position="178"/>
    </location>
</feature>
<feature type="modified residue" description="Omega-N-methylarginine" evidence="2">
    <location>
        <position position="451"/>
    </location>
</feature>
<proteinExistence type="evidence at protein level"/>
<accession>Q80Y86</accession>
<sequence>MCAAEVDRHVAQRYLIKRRLGKGAYGIVWKAMDRRTGEVVAIKKIFDAFRDQIDAQRTFREIMLLKEFGGHPNIIRLLDVIPAKNDRDIYLVFESMDTDLNAVIQKGRLLKDIHKRCIFYQLLRATKFIHSGRVIHRDQKPANVLLDSACRVKLCDFGLARSLGDLPEGPGGQALTEYVATRWYRAPEVLLSSRWYTPGVDMWSLGCILGEMLRGQPLFPGTSTFHQLELILKTIPLPSMEELQDLGSDYSALILQNLGSRPQQTLDALLPPDTPPEALDLLKRLLAFAPDKRLSAEQALQHPYVQRFHCPDREWARESDVRLPVHEGDQLSAPEYRKRLYQIILEQSGNSRSPREEGLGVVASRAELRASPARTQSLKSGVLPQVPAETPARKRGPKPPRSPGHDPEHVEVRRQSSDPLFQLPPPGRGERPPGATGQPPSAPSGVKTQVRAMAPSLTSQAEAQAANQALIRSDPARGGGPRAVGARRVPSRLPREAPEPRPGRRMFGISVSQGAQGAARAALGGYSQAYGTVCRSALGRLPLLPGPRA</sequence>
<name>MK15_MOUSE</name>
<gene>
    <name evidence="12" type="primary">Mapk15</name>
    <name evidence="10" type="synonym">Erk7</name>
    <name evidence="9" type="synonym">Erk8</name>
</gene>